<gene>
    <name evidence="1" type="primary">hisI</name>
    <name type="ordered locus">Arad_2477</name>
</gene>
<proteinExistence type="inferred from homology"/>
<comment type="function">
    <text evidence="1">Catalyzes the hydrolysis of the adenine ring of phosphoribosyl-AMP.</text>
</comment>
<comment type="catalytic activity">
    <reaction evidence="1">
        <text>1-(5-phospho-beta-D-ribosyl)-5'-AMP + H2O = 1-(5-phospho-beta-D-ribosyl)-5-[(5-phospho-beta-D-ribosylamino)methylideneamino]imidazole-4-carboxamide</text>
        <dbReference type="Rhea" id="RHEA:20049"/>
        <dbReference type="ChEBI" id="CHEBI:15377"/>
        <dbReference type="ChEBI" id="CHEBI:58435"/>
        <dbReference type="ChEBI" id="CHEBI:59457"/>
        <dbReference type="EC" id="3.5.4.19"/>
    </reaction>
</comment>
<comment type="cofactor">
    <cofactor evidence="1">
        <name>Mg(2+)</name>
        <dbReference type="ChEBI" id="CHEBI:18420"/>
    </cofactor>
    <text evidence="1">Binds 1 Mg(2+) ion per subunit.</text>
</comment>
<comment type="cofactor">
    <cofactor evidence="1">
        <name>Zn(2+)</name>
        <dbReference type="ChEBI" id="CHEBI:29105"/>
    </cofactor>
    <text evidence="1">Binds 1 zinc ion per subunit.</text>
</comment>
<comment type="pathway">
    <text evidence="1">Amino-acid biosynthesis; L-histidine biosynthesis; L-histidine from 5-phospho-alpha-D-ribose 1-diphosphate: step 3/9.</text>
</comment>
<comment type="subunit">
    <text evidence="1">Homodimer.</text>
</comment>
<comment type="subcellular location">
    <subcellularLocation>
        <location evidence="1">Cytoplasm</location>
    </subcellularLocation>
</comment>
<comment type="similarity">
    <text evidence="1">Belongs to the PRA-CH family.</text>
</comment>
<sequence length="149" mass="16737">MNLVFNAPSTDKSELEDAGDFTPRFDDRGLITAIVTDAHDGELLMVAHMNAEALALTIKTKTAHYYSRSRGKLWKKGETSGNLQTVTEIRTDCDQDAIWLKVVVAGHDATCHTGRRSCFYRTVELEDGKPVLNVVDDHLHFDPSEIYRK</sequence>
<feature type="chain" id="PRO_1000149061" description="Phosphoribosyl-AMP cyclohydrolase">
    <location>
        <begin position="1"/>
        <end position="149"/>
    </location>
</feature>
<feature type="binding site" evidence="1">
    <location>
        <position position="92"/>
    </location>
    <ligand>
        <name>Mg(2+)</name>
        <dbReference type="ChEBI" id="CHEBI:18420"/>
    </ligand>
</feature>
<feature type="binding site" evidence="1">
    <location>
        <position position="93"/>
    </location>
    <ligand>
        <name>Zn(2+)</name>
        <dbReference type="ChEBI" id="CHEBI:29105"/>
        <note>ligand shared between dimeric partners</note>
    </ligand>
</feature>
<feature type="binding site" evidence="1">
    <location>
        <position position="94"/>
    </location>
    <ligand>
        <name>Mg(2+)</name>
        <dbReference type="ChEBI" id="CHEBI:18420"/>
    </ligand>
</feature>
<feature type="binding site" evidence="1">
    <location>
        <position position="96"/>
    </location>
    <ligand>
        <name>Mg(2+)</name>
        <dbReference type="ChEBI" id="CHEBI:18420"/>
    </ligand>
</feature>
<feature type="binding site" evidence="1">
    <location>
        <position position="111"/>
    </location>
    <ligand>
        <name>Zn(2+)</name>
        <dbReference type="ChEBI" id="CHEBI:29105"/>
        <note>ligand shared between dimeric partners</note>
    </ligand>
</feature>
<feature type="binding site" evidence="1">
    <location>
        <position position="118"/>
    </location>
    <ligand>
        <name>Zn(2+)</name>
        <dbReference type="ChEBI" id="CHEBI:29105"/>
        <note>ligand shared between dimeric partners</note>
    </ligand>
</feature>
<protein>
    <recommendedName>
        <fullName evidence="1">Phosphoribosyl-AMP cyclohydrolase</fullName>
        <shortName evidence="1">PRA-CH</shortName>
        <ecNumber evidence="1">3.5.4.19</ecNumber>
    </recommendedName>
</protein>
<accession>B9JFG9</accession>
<organism>
    <name type="scientific">Rhizobium rhizogenes (strain K84 / ATCC BAA-868)</name>
    <name type="common">Agrobacterium radiobacter</name>
    <dbReference type="NCBI Taxonomy" id="311403"/>
    <lineage>
        <taxon>Bacteria</taxon>
        <taxon>Pseudomonadati</taxon>
        <taxon>Pseudomonadota</taxon>
        <taxon>Alphaproteobacteria</taxon>
        <taxon>Hyphomicrobiales</taxon>
        <taxon>Rhizobiaceae</taxon>
        <taxon>Rhizobium/Agrobacterium group</taxon>
        <taxon>Rhizobium</taxon>
    </lineage>
</organism>
<evidence type="ECO:0000255" key="1">
    <source>
        <dbReference type="HAMAP-Rule" id="MF_01021"/>
    </source>
</evidence>
<dbReference type="EC" id="3.5.4.19" evidence="1"/>
<dbReference type="EMBL" id="CP000628">
    <property type="protein sequence ID" value="ACM26659.1"/>
    <property type="molecule type" value="Genomic_DNA"/>
</dbReference>
<dbReference type="RefSeq" id="WP_012651512.1">
    <property type="nucleotide sequence ID" value="NC_011985.1"/>
</dbReference>
<dbReference type="SMR" id="B9JFG9"/>
<dbReference type="STRING" id="311403.Arad_2477"/>
<dbReference type="GeneID" id="86848518"/>
<dbReference type="KEGG" id="ara:Arad_2477"/>
<dbReference type="eggNOG" id="COG0139">
    <property type="taxonomic scope" value="Bacteria"/>
</dbReference>
<dbReference type="HOGENOM" id="CLU_048577_5_0_5"/>
<dbReference type="UniPathway" id="UPA00031">
    <property type="reaction ID" value="UER00008"/>
</dbReference>
<dbReference type="Proteomes" id="UP000001600">
    <property type="component" value="Chromosome 1"/>
</dbReference>
<dbReference type="GO" id="GO:0005737">
    <property type="term" value="C:cytoplasm"/>
    <property type="evidence" value="ECO:0007669"/>
    <property type="project" value="UniProtKB-SubCell"/>
</dbReference>
<dbReference type="GO" id="GO:0000287">
    <property type="term" value="F:magnesium ion binding"/>
    <property type="evidence" value="ECO:0007669"/>
    <property type="project" value="UniProtKB-UniRule"/>
</dbReference>
<dbReference type="GO" id="GO:0004635">
    <property type="term" value="F:phosphoribosyl-AMP cyclohydrolase activity"/>
    <property type="evidence" value="ECO:0007669"/>
    <property type="project" value="UniProtKB-UniRule"/>
</dbReference>
<dbReference type="GO" id="GO:0008270">
    <property type="term" value="F:zinc ion binding"/>
    <property type="evidence" value="ECO:0007669"/>
    <property type="project" value="UniProtKB-UniRule"/>
</dbReference>
<dbReference type="GO" id="GO:0000105">
    <property type="term" value="P:L-histidine biosynthetic process"/>
    <property type="evidence" value="ECO:0007669"/>
    <property type="project" value="UniProtKB-UniRule"/>
</dbReference>
<dbReference type="FunFam" id="3.10.20.810:FF:000001">
    <property type="entry name" value="Histidine biosynthesis bifunctional protein HisIE"/>
    <property type="match status" value="1"/>
</dbReference>
<dbReference type="Gene3D" id="4.10.80.70">
    <property type="match status" value="1"/>
</dbReference>
<dbReference type="Gene3D" id="3.10.20.810">
    <property type="entry name" value="Phosphoribosyl-AMP cyclohydrolase"/>
    <property type="match status" value="1"/>
</dbReference>
<dbReference type="HAMAP" id="MF_01021">
    <property type="entry name" value="HisI"/>
    <property type="match status" value="1"/>
</dbReference>
<dbReference type="InterPro" id="IPR026660">
    <property type="entry name" value="PRA-CH"/>
</dbReference>
<dbReference type="InterPro" id="IPR002496">
    <property type="entry name" value="PRib_AMP_CycHydrolase_dom"/>
</dbReference>
<dbReference type="InterPro" id="IPR038019">
    <property type="entry name" value="PRib_AMP_CycHydrolase_sf"/>
</dbReference>
<dbReference type="NCBIfam" id="NF000768">
    <property type="entry name" value="PRK00051.1"/>
    <property type="match status" value="1"/>
</dbReference>
<dbReference type="PANTHER" id="PTHR42945">
    <property type="entry name" value="HISTIDINE BIOSYNTHESIS BIFUNCTIONAL PROTEIN"/>
    <property type="match status" value="1"/>
</dbReference>
<dbReference type="PANTHER" id="PTHR42945:SF1">
    <property type="entry name" value="HISTIDINE BIOSYNTHESIS BIFUNCTIONAL PROTEIN HIS7"/>
    <property type="match status" value="1"/>
</dbReference>
<dbReference type="Pfam" id="PF01502">
    <property type="entry name" value="PRA-CH"/>
    <property type="match status" value="1"/>
</dbReference>
<dbReference type="SUPFAM" id="SSF141734">
    <property type="entry name" value="HisI-like"/>
    <property type="match status" value="1"/>
</dbReference>
<reference key="1">
    <citation type="journal article" date="2009" name="J. Bacteriol.">
        <title>Genome sequences of three Agrobacterium biovars help elucidate the evolution of multichromosome genomes in bacteria.</title>
        <authorList>
            <person name="Slater S.C."/>
            <person name="Goldman B.S."/>
            <person name="Goodner B."/>
            <person name="Setubal J.C."/>
            <person name="Farrand S.K."/>
            <person name="Nester E.W."/>
            <person name="Burr T.J."/>
            <person name="Banta L."/>
            <person name="Dickerman A.W."/>
            <person name="Paulsen I."/>
            <person name="Otten L."/>
            <person name="Suen G."/>
            <person name="Welch R."/>
            <person name="Almeida N.F."/>
            <person name="Arnold F."/>
            <person name="Burton O.T."/>
            <person name="Du Z."/>
            <person name="Ewing A."/>
            <person name="Godsy E."/>
            <person name="Heisel S."/>
            <person name="Houmiel K.L."/>
            <person name="Jhaveri J."/>
            <person name="Lu J."/>
            <person name="Miller N.M."/>
            <person name="Norton S."/>
            <person name="Chen Q."/>
            <person name="Phoolcharoen W."/>
            <person name="Ohlin V."/>
            <person name="Ondrusek D."/>
            <person name="Pride N."/>
            <person name="Stricklin S.L."/>
            <person name="Sun J."/>
            <person name="Wheeler C."/>
            <person name="Wilson L."/>
            <person name="Zhu H."/>
            <person name="Wood D.W."/>
        </authorList>
    </citation>
    <scope>NUCLEOTIDE SEQUENCE [LARGE SCALE GENOMIC DNA]</scope>
    <source>
        <strain>K84 / ATCC BAA-868</strain>
    </source>
</reference>
<keyword id="KW-0028">Amino-acid biosynthesis</keyword>
<keyword id="KW-0963">Cytoplasm</keyword>
<keyword id="KW-0368">Histidine biosynthesis</keyword>
<keyword id="KW-0378">Hydrolase</keyword>
<keyword id="KW-0460">Magnesium</keyword>
<keyword id="KW-0479">Metal-binding</keyword>
<keyword id="KW-0862">Zinc</keyword>
<name>HIS3_RHIR8</name>